<evidence type="ECO:0000255" key="1">
    <source>
        <dbReference type="HAMAP-Rule" id="MF_01101"/>
    </source>
</evidence>
<accession>C4ZVI8</accession>
<keyword id="KW-0997">Cell inner membrane</keyword>
<keyword id="KW-1003">Cell membrane</keyword>
<keyword id="KW-0472">Membrane</keyword>
<keyword id="KW-0812">Transmembrane</keyword>
<keyword id="KW-1133">Transmembrane helix</keyword>
<feature type="chain" id="PRO_1000213545" description="UPF0208 membrane protein YfbV">
    <location>
        <begin position="1"/>
        <end position="151"/>
    </location>
</feature>
<feature type="transmembrane region" description="Helical" evidence="1">
    <location>
        <begin position="46"/>
        <end position="65"/>
    </location>
</feature>
<feature type="transmembrane region" description="Helical" evidence="1">
    <location>
        <begin position="69"/>
        <end position="91"/>
    </location>
</feature>
<dbReference type="EMBL" id="CP001396">
    <property type="protein sequence ID" value="ACR62185.1"/>
    <property type="molecule type" value="Genomic_DNA"/>
</dbReference>
<dbReference type="RefSeq" id="WP_000106627.1">
    <property type="nucleotide sequence ID" value="NC_012759.1"/>
</dbReference>
<dbReference type="GeneID" id="93774879"/>
<dbReference type="KEGG" id="ebw:BWG_2069"/>
<dbReference type="HOGENOM" id="CLU_128746_0_0_6"/>
<dbReference type="GO" id="GO:0005886">
    <property type="term" value="C:plasma membrane"/>
    <property type="evidence" value="ECO:0007669"/>
    <property type="project" value="UniProtKB-SubCell"/>
</dbReference>
<dbReference type="HAMAP" id="MF_01101">
    <property type="entry name" value="UPF0208"/>
    <property type="match status" value="1"/>
</dbReference>
<dbReference type="InterPro" id="IPR007334">
    <property type="entry name" value="UPF0208"/>
</dbReference>
<dbReference type="NCBIfam" id="NF002493">
    <property type="entry name" value="PRK01816.1"/>
    <property type="match status" value="1"/>
</dbReference>
<dbReference type="Pfam" id="PF04217">
    <property type="entry name" value="DUF412"/>
    <property type="match status" value="1"/>
</dbReference>
<comment type="subcellular location">
    <subcellularLocation>
        <location evidence="1">Cell inner membrane</location>
        <topology evidence="1">Multi-pass membrane protein</topology>
    </subcellularLocation>
</comment>
<comment type="similarity">
    <text evidence="1">Belongs to the UPF0208 family.</text>
</comment>
<proteinExistence type="inferred from homology"/>
<organism>
    <name type="scientific">Escherichia coli (strain K12 / MC4100 / BW2952)</name>
    <dbReference type="NCBI Taxonomy" id="595496"/>
    <lineage>
        <taxon>Bacteria</taxon>
        <taxon>Pseudomonadati</taxon>
        <taxon>Pseudomonadota</taxon>
        <taxon>Gammaproteobacteria</taxon>
        <taxon>Enterobacterales</taxon>
        <taxon>Enterobacteriaceae</taxon>
        <taxon>Escherichia</taxon>
    </lineage>
</organism>
<protein>
    <recommendedName>
        <fullName evidence="1">UPF0208 membrane protein YfbV</fullName>
    </recommendedName>
</protein>
<reference key="1">
    <citation type="journal article" date="2009" name="J. Bacteriol.">
        <title>Genomic sequencing reveals regulatory mutations and recombinational events in the widely used MC4100 lineage of Escherichia coli K-12.</title>
        <authorList>
            <person name="Ferenci T."/>
            <person name="Zhou Z."/>
            <person name="Betteridge T."/>
            <person name="Ren Y."/>
            <person name="Liu Y."/>
            <person name="Feng L."/>
            <person name="Reeves P.R."/>
            <person name="Wang L."/>
        </authorList>
    </citation>
    <scope>NUCLEOTIDE SEQUENCE [LARGE SCALE GENOMIC DNA]</scope>
    <source>
        <strain>K12 / MC4100 / BW2952</strain>
    </source>
</reference>
<name>YFBV_ECOBW</name>
<sequence>MSTPDNRSVNFFSLFRRGQHYSKTWPLEKRLAPVFVENRVIKMTRYAIRFMPPIAVFTLCWQIALGGQLGPAVATALFALSLPMQGLWWLGKRSVTPLPPAILNWFYEVRGKLQESGQVLAPVEGKPDYQALADTLKRAFKQLDKTFLDDL</sequence>
<gene>
    <name evidence="1" type="primary">yfbV</name>
    <name type="ordered locus">BWG_2069</name>
</gene>